<name>VAPB6_MYCTO</name>
<proteinExistence type="inferred from homology"/>
<protein>
    <recommendedName>
        <fullName>Putative antitoxin VapB6</fullName>
    </recommendedName>
</protein>
<organism>
    <name type="scientific">Mycobacterium tuberculosis (strain CDC 1551 / Oshkosh)</name>
    <dbReference type="NCBI Taxonomy" id="83331"/>
    <lineage>
        <taxon>Bacteria</taxon>
        <taxon>Bacillati</taxon>
        <taxon>Actinomycetota</taxon>
        <taxon>Actinomycetes</taxon>
        <taxon>Mycobacteriales</taxon>
        <taxon>Mycobacteriaceae</taxon>
        <taxon>Mycobacterium</taxon>
        <taxon>Mycobacterium tuberculosis complex</taxon>
    </lineage>
</organism>
<dbReference type="EMBL" id="AE000516">
    <property type="protein sequence ID" value="AAK44911.1"/>
    <property type="molecule type" value="Genomic_DNA"/>
</dbReference>
<dbReference type="PIR" id="D70534">
    <property type="entry name" value="D70534"/>
</dbReference>
<dbReference type="RefSeq" id="WP_003403368.1">
    <property type="nucleotide sequence ID" value="NZ_KK341227.1"/>
</dbReference>
<dbReference type="SMR" id="P9WJ56"/>
<dbReference type="KEGG" id="mtc:MT0686"/>
<dbReference type="PATRIC" id="fig|83331.31.peg.730"/>
<dbReference type="HOGENOM" id="CLU_179376_2_0_11"/>
<dbReference type="Proteomes" id="UP000001020">
    <property type="component" value="Chromosome"/>
</dbReference>
<dbReference type="InterPro" id="IPR019239">
    <property type="entry name" value="VapB_antitoxin"/>
</dbReference>
<dbReference type="Pfam" id="PF09957">
    <property type="entry name" value="VapB_antitoxin"/>
    <property type="match status" value="1"/>
</dbReference>
<comment type="function">
    <text evidence="1">Antitoxin component of a possible type II toxin-antitoxin (TA) system. The cognate toxin is VapC6 (By similarity).</text>
</comment>
<evidence type="ECO:0000250" key="1"/>
<keyword id="KW-1185">Reference proteome</keyword>
<keyword id="KW-1277">Toxin-antitoxin system</keyword>
<gene>
    <name type="primary">vapB6</name>
    <name type="ordered locus">MT0686</name>
</gene>
<reference key="1">
    <citation type="journal article" date="2002" name="J. Bacteriol.">
        <title>Whole-genome comparison of Mycobacterium tuberculosis clinical and laboratory strains.</title>
        <authorList>
            <person name="Fleischmann R.D."/>
            <person name="Alland D."/>
            <person name="Eisen J.A."/>
            <person name="Carpenter L."/>
            <person name="White O."/>
            <person name="Peterson J.D."/>
            <person name="DeBoy R.T."/>
            <person name="Dodson R.J."/>
            <person name="Gwinn M.L."/>
            <person name="Haft D.H."/>
            <person name="Hickey E.K."/>
            <person name="Kolonay J.F."/>
            <person name="Nelson W.C."/>
            <person name="Umayam L.A."/>
            <person name="Ermolaeva M.D."/>
            <person name="Salzberg S.L."/>
            <person name="Delcher A."/>
            <person name="Utterback T.R."/>
            <person name="Weidman J.F."/>
            <person name="Khouri H.M."/>
            <person name="Gill J."/>
            <person name="Mikula A."/>
            <person name="Bishai W."/>
            <person name="Jacobs W.R. Jr."/>
            <person name="Venter J.C."/>
            <person name="Fraser C.M."/>
        </authorList>
    </citation>
    <scope>NUCLEOTIDE SEQUENCE [LARGE SCALE GENOMIC DNA]</scope>
    <source>
        <strain>CDC 1551 / Oshkosh</strain>
    </source>
</reference>
<sequence length="51" mass="5905">MSVTQIDLDDEALADVMRIAAVHTKKEAVNLAMRDYVERFRRIEALARSRE</sequence>
<feature type="chain" id="PRO_0000427888" description="Putative antitoxin VapB6">
    <location>
        <begin position="1"/>
        <end position="51"/>
    </location>
</feature>
<accession>P9WJ56</accession>
<accession>L0T4C5</accession>
<accession>O06782</accession>
<accession>Q7D9H1</accession>